<gene>
    <name evidence="1" type="primary">ldh3</name>
    <name type="ordered locus">BT9727_4708</name>
</gene>
<protein>
    <recommendedName>
        <fullName evidence="1">L-lactate dehydrogenase 3</fullName>
        <shortName evidence="1">L-LDH 3</shortName>
        <ecNumber evidence="1">1.1.1.27</ecNumber>
    </recommendedName>
</protein>
<dbReference type="EC" id="1.1.1.27" evidence="1"/>
<dbReference type="EMBL" id="AE017355">
    <property type="protein sequence ID" value="AAT63957.1"/>
    <property type="status" value="ALT_INIT"/>
    <property type="molecule type" value="Genomic_DNA"/>
</dbReference>
<dbReference type="RefSeq" id="YP_039018.1">
    <property type="nucleotide sequence ID" value="NC_005957.1"/>
</dbReference>
<dbReference type="SMR" id="Q6HBQ8"/>
<dbReference type="KEGG" id="btk:BT9727_4708"/>
<dbReference type="PATRIC" id="fig|281309.8.peg.5009"/>
<dbReference type="HOGENOM" id="CLU_045401_1_0_9"/>
<dbReference type="UniPathway" id="UPA00554">
    <property type="reaction ID" value="UER00611"/>
</dbReference>
<dbReference type="Proteomes" id="UP000001301">
    <property type="component" value="Chromosome"/>
</dbReference>
<dbReference type="GO" id="GO:0005737">
    <property type="term" value="C:cytoplasm"/>
    <property type="evidence" value="ECO:0007669"/>
    <property type="project" value="UniProtKB-SubCell"/>
</dbReference>
<dbReference type="GO" id="GO:0004459">
    <property type="term" value="F:L-lactate dehydrogenase activity"/>
    <property type="evidence" value="ECO:0007669"/>
    <property type="project" value="UniProtKB-UniRule"/>
</dbReference>
<dbReference type="GO" id="GO:0006096">
    <property type="term" value="P:glycolytic process"/>
    <property type="evidence" value="ECO:0007669"/>
    <property type="project" value="UniProtKB-UniRule"/>
</dbReference>
<dbReference type="GO" id="GO:0006089">
    <property type="term" value="P:lactate metabolic process"/>
    <property type="evidence" value="ECO:0007669"/>
    <property type="project" value="TreeGrafter"/>
</dbReference>
<dbReference type="CDD" id="cd05291">
    <property type="entry name" value="HicDH_like"/>
    <property type="match status" value="1"/>
</dbReference>
<dbReference type="FunFam" id="3.90.110.10:FF:000005">
    <property type="entry name" value="L-lactate dehydrogenase"/>
    <property type="match status" value="1"/>
</dbReference>
<dbReference type="FunFam" id="3.40.50.720:FF:000018">
    <property type="entry name" value="Malate dehydrogenase"/>
    <property type="match status" value="1"/>
</dbReference>
<dbReference type="Gene3D" id="3.90.110.10">
    <property type="entry name" value="Lactate dehydrogenase/glycoside hydrolase, family 4, C-terminal"/>
    <property type="match status" value="1"/>
</dbReference>
<dbReference type="Gene3D" id="3.40.50.720">
    <property type="entry name" value="NAD(P)-binding Rossmann-like Domain"/>
    <property type="match status" value="1"/>
</dbReference>
<dbReference type="HAMAP" id="MF_00488">
    <property type="entry name" value="Lactate_dehydrog"/>
    <property type="match status" value="1"/>
</dbReference>
<dbReference type="InterPro" id="IPR001557">
    <property type="entry name" value="L-lactate/malate_DH"/>
</dbReference>
<dbReference type="InterPro" id="IPR011304">
    <property type="entry name" value="L-lactate_DH"/>
</dbReference>
<dbReference type="InterPro" id="IPR018177">
    <property type="entry name" value="L-lactate_DH_AS"/>
</dbReference>
<dbReference type="InterPro" id="IPR022383">
    <property type="entry name" value="Lactate/malate_DH_C"/>
</dbReference>
<dbReference type="InterPro" id="IPR001236">
    <property type="entry name" value="Lactate/malate_DH_N"/>
</dbReference>
<dbReference type="InterPro" id="IPR015955">
    <property type="entry name" value="Lactate_DH/Glyco_Ohase_4_C"/>
</dbReference>
<dbReference type="InterPro" id="IPR036291">
    <property type="entry name" value="NAD(P)-bd_dom_sf"/>
</dbReference>
<dbReference type="NCBIfam" id="TIGR01771">
    <property type="entry name" value="L-LDH-NAD"/>
    <property type="match status" value="1"/>
</dbReference>
<dbReference type="NCBIfam" id="NF000824">
    <property type="entry name" value="PRK00066.1"/>
    <property type="match status" value="1"/>
</dbReference>
<dbReference type="NCBIfam" id="NF004863">
    <property type="entry name" value="PRK06223.1"/>
    <property type="match status" value="1"/>
</dbReference>
<dbReference type="PANTHER" id="PTHR43128">
    <property type="entry name" value="L-2-HYDROXYCARBOXYLATE DEHYDROGENASE (NAD(P)(+))"/>
    <property type="match status" value="1"/>
</dbReference>
<dbReference type="PANTHER" id="PTHR43128:SF16">
    <property type="entry name" value="L-LACTATE DEHYDROGENASE"/>
    <property type="match status" value="1"/>
</dbReference>
<dbReference type="Pfam" id="PF02866">
    <property type="entry name" value="Ldh_1_C"/>
    <property type="match status" value="1"/>
</dbReference>
<dbReference type="Pfam" id="PF00056">
    <property type="entry name" value="Ldh_1_N"/>
    <property type="match status" value="1"/>
</dbReference>
<dbReference type="PIRSF" id="PIRSF000102">
    <property type="entry name" value="Lac_mal_DH"/>
    <property type="match status" value="1"/>
</dbReference>
<dbReference type="PRINTS" id="PR00086">
    <property type="entry name" value="LLDHDRGNASE"/>
</dbReference>
<dbReference type="SUPFAM" id="SSF56327">
    <property type="entry name" value="LDH C-terminal domain-like"/>
    <property type="match status" value="1"/>
</dbReference>
<dbReference type="SUPFAM" id="SSF51735">
    <property type="entry name" value="NAD(P)-binding Rossmann-fold domains"/>
    <property type="match status" value="1"/>
</dbReference>
<dbReference type="PROSITE" id="PS00064">
    <property type="entry name" value="L_LDH"/>
    <property type="match status" value="1"/>
</dbReference>
<sequence length="316" mass="34798">MKRHTRKIAIIGTGLVGSSCAYSIVNQGICEELLLIDINHERAVGEAMDLSHCINFTNTRTKVYAGSYEDCKDMDIVIITAGPAPKPGQSRLDTLGASAKIMESVVGGVMESGFDGIFLLASNPVDIITYQVWKLSGLPRNRVIGTGTSLDSSRLRTILSEMLHVDPRSIHGYSLGEHGDSQMVAWSHVTVGGKPILQILEEQKERFGEIDLDEIVEKTAKAGWEIYKRKGTTYYGIGNSLAYIANSIFNDDHRVIAVSAILDGEYGEYDICTGVPAIITRDGIREIVELNLTEDEESRFAKSNDILRDYMKTIGY</sequence>
<accession>Q6HBQ8</accession>
<organism>
    <name type="scientific">Bacillus thuringiensis subsp. konkukian (strain 97-27)</name>
    <dbReference type="NCBI Taxonomy" id="281309"/>
    <lineage>
        <taxon>Bacteria</taxon>
        <taxon>Bacillati</taxon>
        <taxon>Bacillota</taxon>
        <taxon>Bacilli</taxon>
        <taxon>Bacillales</taxon>
        <taxon>Bacillaceae</taxon>
        <taxon>Bacillus</taxon>
        <taxon>Bacillus cereus group</taxon>
    </lineage>
</organism>
<feature type="chain" id="PRO_0000237543" description="L-lactate dehydrogenase 3">
    <location>
        <begin position="1"/>
        <end position="316"/>
    </location>
</feature>
<feature type="active site" description="Proton acceptor" evidence="1">
    <location>
        <position position="178"/>
    </location>
</feature>
<feature type="binding site" evidence="1">
    <location>
        <position position="16"/>
    </location>
    <ligand>
        <name>NAD(+)</name>
        <dbReference type="ChEBI" id="CHEBI:57540"/>
    </ligand>
</feature>
<feature type="binding site" evidence="1">
    <location>
        <position position="37"/>
    </location>
    <ligand>
        <name>NAD(+)</name>
        <dbReference type="ChEBI" id="CHEBI:57540"/>
    </ligand>
</feature>
<feature type="binding site" evidence="1">
    <location>
        <position position="42"/>
    </location>
    <ligand>
        <name>NAD(+)</name>
        <dbReference type="ChEBI" id="CHEBI:57540"/>
    </ligand>
</feature>
<feature type="binding site" evidence="1">
    <location>
        <position position="68"/>
    </location>
    <ligand>
        <name>NAD(+)</name>
        <dbReference type="ChEBI" id="CHEBI:57540"/>
    </ligand>
</feature>
<feature type="binding site" evidence="1">
    <location>
        <position position="91"/>
    </location>
    <ligand>
        <name>substrate</name>
    </ligand>
</feature>
<feature type="binding site" evidence="1">
    <location>
        <position position="104"/>
    </location>
    <ligand>
        <name>NAD(+)</name>
        <dbReference type="ChEBI" id="CHEBI:57540"/>
    </ligand>
</feature>
<feature type="binding site" evidence="1">
    <location>
        <begin position="121"/>
        <end position="123"/>
    </location>
    <ligand>
        <name>NAD(+)</name>
        <dbReference type="ChEBI" id="CHEBI:57540"/>
    </ligand>
</feature>
<feature type="binding site" evidence="1">
    <location>
        <begin position="123"/>
        <end position="126"/>
    </location>
    <ligand>
        <name>substrate</name>
    </ligand>
</feature>
<feature type="binding site" evidence="1">
    <location>
        <position position="146"/>
    </location>
    <ligand>
        <name>NAD(+)</name>
        <dbReference type="ChEBI" id="CHEBI:57540"/>
    </ligand>
</feature>
<feature type="binding site" evidence="1">
    <location>
        <begin position="151"/>
        <end position="154"/>
    </location>
    <ligand>
        <name>substrate</name>
    </ligand>
</feature>
<feature type="binding site" evidence="1">
    <location>
        <position position="156"/>
    </location>
    <ligand>
        <name>beta-D-fructose 1,6-bisphosphate</name>
        <dbReference type="ChEBI" id="CHEBI:32966"/>
        <note>allosteric activator</note>
    </ligand>
</feature>
<feature type="binding site" evidence="1">
    <location>
        <position position="171"/>
    </location>
    <ligand>
        <name>beta-D-fructose 1,6-bisphosphate</name>
        <dbReference type="ChEBI" id="CHEBI:32966"/>
        <note>allosteric activator</note>
    </ligand>
</feature>
<feature type="binding site" evidence="1">
    <location>
        <position position="233"/>
    </location>
    <ligand>
        <name>substrate</name>
    </ligand>
</feature>
<comment type="function">
    <text evidence="1">Catalyzes the conversion of lactate to pyruvate.</text>
</comment>
<comment type="catalytic activity">
    <reaction evidence="1">
        <text>(S)-lactate + NAD(+) = pyruvate + NADH + H(+)</text>
        <dbReference type="Rhea" id="RHEA:23444"/>
        <dbReference type="ChEBI" id="CHEBI:15361"/>
        <dbReference type="ChEBI" id="CHEBI:15378"/>
        <dbReference type="ChEBI" id="CHEBI:16651"/>
        <dbReference type="ChEBI" id="CHEBI:57540"/>
        <dbReference type="ChEBI" id="CHEBI:57945"/>
        <dbReference type="EC" id="1.1.1.27"/>
    </reaction>
</comment>
<comment type="activity regulation">
    <text evidence="1">Allosterically activated by fructose 1,6-bisphosphate (FBP).</text>
</comment>
<comment type="pathway">
    <text evidence="1">Fermentation; pyruvate fermentation to lactate; (S)-lactate from pyruvate: step 1/1.</text>
</comment>
<comment type="subunit">
    <text evidence="1">Homotetramer.</text>
</comment>
<comment type="subcellular location">
    <subcellularLocation>
        <location evidence="1">Cytoplasm</location>
    </subcellularLocation>
</comment>
<comment type="similarity">
    <text evidence="1">Belongs to the LDH/MDH superfamily. LDH family.</text>
</comment>
<comment type="sequence caution" evidence="2">
    <conflict type="erroneous initiation">
        <sequence resource="EMBL-CDS" id="AAT63957"/>
    </conflict>
</comment>
<evidence type="ECO:0000255" key="1">
    <source>
        <dbReference type="HAMAP-Rule" id="MF_00488"/>
    </source>
</evidence>
<evidence type="ECO:0000305" key="2"/>
<proteinExistence type="inferred from homology"/>
<reference key="1">
    <citation type="journal article" date="2006" name="J. Bacteriol.">
        <title>Pathogenomic sequence analysis of Bacillus cereus and Bacillus thuringiensis isolates closely related to Bacillus anthracis.</title>
        <authorList>
            <person name="Han C.S."/>
            <person name="Xie G."/>
            <person name="Challacombe J.F."/>
            <person name="Altherr M.R."/>
            <person name="Bhotika S.S."/>
            <person name="Bruce D."/>
            <person name="Campbell C.S."/>
            <person name="Campbell M.L."/>
            <person name="Chen J."/>
            <person name="Chertkov O."/>
            <person name="Cleland C."/>
            <person name="Dimitrijevic M."/>
            <person name="Doggett N.A."/>
            <person name="Fawcett J.J."/>
            <person name="Glavina T."/>
            <person name="Goodwin L.A."/>
            <person name="Hill K.K."/>
            <person name="Hitchcock P."/>
            <person name="Jackson P.J."/>
            <person name="Keim P."/>
            <person name="Kewalramani A.R."/>
            <person name="Longmire J."/>
            <person name="Lucas S."/>
            <person name="Malfatti S."/>
            <person name="McMurry K."/>
            <person name="Meincke L.J."/>
            <person name="Misra M."/>
            <person name="Moseman B.L."/>
            <person name="Mundt M."/>
            <person name="Munk A.C."/>
            <person name="Okinaka R.T."/>
            <person name="Parson-Quintana B."/>
            <person name="Reilly L.P."/>
            <person name="Richardson P."/>
            <person name="Robinson D.L."/>
            <person name="Rubin E."/>
            <person name="Saunders E."/>
            <person name="Tapia R."/>
            <person name="Tesmer J.G."/>
            <person name="Thayer N."/>
            <person name="Thompson L.S."/>
            <person name="Tice H."/>
            <person name="Ticknor L.O."/>
            <person name="Wills P.L."/>
            <person name="Brettin T.S."/>
            <person name="Gilna P."/>
        </authorList>
    </citation>
    <scope>NUCLEOTIDE SEQUENCE [LARGE SCALE GENOMIC DNA]</scope>
    <source>
        <strain>97-27</strain>
    </source>
</reference>
<keyword id="KW-0021">Allosteric enzyme</keyword>
<keyword id="KW-0963">Cytoplasm</keyword>
<keyword id="KW-0520">NAD</keyword>
<keyword id="KW-0560">Oxidoreductase</keyword>
<name>LDH3_BACHK</name>